<organism>
    <name type="scientific">Pseudomonas aeruginosa (strain LESB58)</name>
    <dbReference type="NCBI Taxonomy" id="557722"/>
    <lineage>
        <taxon>Bacteria</taxon>
        <taxon>Pseudomonadati</taxon>
        <taxon>Pseudomonadota</taxon>
        <taxon>Gammaproteobacteria</taxon>
        <taxon>Pseudomonadales</taxon>
        <taxon>Pseudomonadaceae</taxon>
        <taxon>Pseudomonas</taxon>
    </lineage>
</organism>
<protein>
    <recommendedName>
        <fullName evidence="1">Ribosomal RNA large subunit methyltransferase H</fullName>
        <ecNumber evidence="1">2.1.1.177</ecNumber>
    </recommendedName>
    <alternativeName>
        <fullName evidence="1">23S rRNA (pseudouridine1915-N3)-methyltransferase</fullName>
    </alternativeName>
    <alternativeName>
        <fullName evidence="1">23S rRNA m3Psi1915 methyltransferase</fullName>
    </alternativeName>
    <alternativeName>
        <fullName evidence="1">rRNA (pseudouridine-N3-)-methyltransferase RlmH</fullName>
    </alternativeName>
</protein>
<accession>B7V8A9</accession>
<sequence length="155" mass="17791">MRLRLIAVGSRMPRWVEEGWQEYVKRLPAELSLELVEIPLNTRGKNADVARLIRQEGEAMLARVQPGERVVTLEVEGRPWSTEQLARELDRWRLDARTVNLMVGGPEGLAPEVCARSEQRWSLSPLTLPHPLVRILVGEQIYRAWTVLSGHPYHK</sequence>
<reference key="1">
    <citation type="journal article" date="2009" name="Genome Res.">
        <title>Newly introduced genomic prophage islands are critical determinants of in vivo competitiveness in the Liverpool epidemic strain of Pseudomonas aeruginosa.</title>
        <authorList>
            <person name="Winstanley C."/>
            <person name="Langille M.G.I."/>
            <person name="Fothergill J.L."/>
            <person name="Kukavica-Ibrulj I."/>
            <person name="Paradis-Bleau C."/>
            <person name="Sanschagrin F."/>
            <person name="Thomson N.R."/>
            <person name="Winsor G.L."/>
            <person name="Quail M.A."/>
            <person name="Lennard N."/>
            <person name="Bignell A."/>
            <person name="Clarke L."/>
            <person name="Seeger K."/>
            <person name="Saunders D."/>
            <person name="Harris D."/>
            <person name="Parkhill J."/>
            <person name="Hancock R.E.W."/>
            <person name="Brinkman F.S.L."/>
            <person name="Levesque R.C."/>
        </authorList>
    </citation>
    <scope>NUCLEOTIDE SEQUENCE [LARGE SCALE GENOMIC DNA]</scope>
    <source>
        <strain>LESB58</strain>
    </source>
</reference>
<evidence type="ECO:0000255" key="1">
    <source>
        <dbReference type="HAMAP-Rule" id="MF_00658"/>
    </source>
</evidence>
<dbReference type="EC" id="2.1.1.177" evidence="1"/>
<dbReference type="EMBL" id="FM209186">
    <property type="protein sequence ID" value="CAW25699.1"/>
    <property type="molecule type" value="Genomic_DNA"/>
</dbReference>
<dbReference type="RefSeq" id="WP_003093193.1">
    <property type="nucleotide sequence ID" value="NC_011770.1"/>
</dbReference>
<dbReference type="SMR" id="B7V8A9"/>
<dbReference type="KEGG" id="pag:PLES_09721"/>
<dbReference type="HOGENOM" id="CLU_100552_1_0_6"/>
<dbReference type="GO" id="GO:0005737">
    <property type="term" value="C:cytoplasm"/>
    <property type="evidence" value="ECO:0007669"/>
    <property type="project" value="UniProtKB-SubCell"/>
</dbReference>
<dbReference type="GO" id="GO:0070038">
    <property type="term" value="F:rRNA (pseudouridine-N3-)-methyltransferase activity"/>
    <property type="evidence" value="ECO:0007669"/>
    <property type="project" value="UniProtKB-UniRule"/>
</dbReference>
<dbReference type="CDD" id="cd18081">
    <property type="entry name" value="RlmH-like"/>
    <property type="match status" value="1"/>
</dbReference>
<dbReference type="Gene3D" id="3.40.1280.10">
    <property type="match status" value="1"/>
</dbReference>
<dbReference type="HAMAP" id="MF_00658">
    <property type="entry name" value="23SrRNA_methyltr_H"/>
    <property type="match status" value="1"/>
</dbReference>
<dbReference type="InterPro" id="IPR029028">
    <property type="entry name" value="Alpha/beta_knot_MTases"/>
</dbReference>
<dbReference type="InterPro" id="IPR003742">
    <property type="entry name" value="RlmH-like"/>
</dbReference>
<dbReference type="InterPro" id="IPR029026">
    <property type="entry name" value="tRNA_m1G_MTases_N"/>
</dbReference>
<dbReference type="NCBIfam" id="NF000986">
    <property type="entry name" value="PRK00103.1-4"/>
    <property type="match status" value="1"/>
</dbReference>
<dbReference type="NCBIfam" id="TIGR00246">
    <property type="entry name" value="tRNA_RlmH_YbeA"/>
    <property type="match status" value="1"/>
</dbReference>
<dbReference type="PANTHER" id="PTHR33603">
    <property type="entry name" value="METHYLTRANSFERASE"/>
    <property type="match status" value="1"/>
</dbReference>
<dbReference type="PANTHER" id="PTHR33603:SF1">
    <property type="entry name" value="RIBOSOMAL RNA LARGE SUBUNIT METHYLTRANSFERASE H"/>
    <property type="match status" value="1"/>
</dbReference>
<dbReference type="Pfam" id="PF02590">
    <property type="entry name" value="SPOUT_MTase"/>
    <property type="match status" value="1"/>
</dbReference>
<dbReference type="PIRSF" id="PIRSF004505">
    <property type="entry name" value="MT_bac"/>
    <property type="match status" value="1"/>
</dbReference>
<dbReference type="SUPFAM" id="SSF75217">
    <property type="entry name" value="alpha/beta knot"/>
    <property type="match status" value="1"/>
</dbReference>
<proteinExistence type="inferred from homology"/>
<keyword id="KW-0963">Cytoplasm</keyword>
<keyword id="KW-0489">Methyltransferase</keyword>
<keyword id="KW-0698">rRNA processing</keyword>
<keyword id="KW-0949">S-adenosyl-L-methionine</keyword>
<keyword id="KW-0808">Transferase</keyword>
<feature type="chain" id="PRO_1000131234" description="Ribosomal RNA large subunit methyltransferase H">
    <location>
        <begin position="1"/>
        <end position="155"/>
    </location>
</feature>
<feature type="binding site" evidence="1">
    <location>
        <position position="73"/>
    </location>
    <ligand>
        <name>S-adenosyl-L-methionine</name>
        <dbReference type="ChEBI" id="CHEBI:59789"/>
    </ligand>
</feature>
<feature type="binding site" evidence="1">
    <location>
        <position position="104"/>
    </location>
    <ligand>
        <name>S-adenosyl-L-methionine</name>
        <dbReference type="ChEBI" id="CHEBI:59789"/>
    </ligand>
</feature>
<feature type="binding site" evidence="1">
    <location>
        <begin position="123"/>
        <end position="128"/>
    </location>
    <ligand>
        <name>S-adenosyl-L-methionine</name>
        <dbReference type="ChEBI" id="CHEBI:59789"/>
    </ligand>
</feature>
<name>RLMH_PSEA8</name>
<comment type="function">
    <text evidence="1">Specifically methylates the pseudouridine at position 1915 (m3Psi1915) in 23S rRNA.</text>
</comment>
<comment type="catalytic activity">
    <reaction evidence="1">
        <text>pseudouridine(1915) in 23S rRNA + S-adenosyl-L-methionine = N(3)-methylpseudouridine(1915) in 23S rRNA + S-adenosyl-L-homocysteine + H(+)</text>
        <dbReference type="Rhea" id="RHEA:42752"/>
        <dbReference type="Rhea" id="RHEA-COMP:10221"/>
        <dbReference type="Rhea" id="RHEA-COMP:10222"/>
        <dbReference type="ChEBI" id="CHEBI:15378"/>
        <dbReference type="ChEBI" id="CHEBI:57856"/>
        <dbReference type="ChEBI" id="CHEBI:59789"/>
        <dbReference type="ChEBI" id="CHEBI:65314"/>
        <dbReference type="ChEBI" id="CHEBI:74486"/>
        <dbReference type="EC" id="2.1.1.177"/>
    </reaction>
</comment>
<comment type="subunit">
    <text evidence="1">Homodimer.</text>
</comment>
<comment type="subcellular location">
    <subcellularLocation>
        <location evidence="1">Cytoplasm</location>
    </subcellularLocation>
</comment>
<comment type="similarity">
    <text evidence="1">Belongs to the RNA methyltransferase RlmH family.</text>
</comment>
<gene>
    <name evidence="1" type="primary">rlmH</name>
    <name type="ordered locus">PLES_09721</name>
</gene>